<reference key="1">
    <citation type="journal article" date="2001" name="Nature">
        <title>Genome sequence of enterohaemorrhagic Escherichia coli O157:H7.</title>
        <authorList>
            <person name="Perna N.T."/>
            <person name="Plunkett G. III"/>
            <person name="Burland V."/>
            <person name="Mau B."/>
            <person name="Glasner J.D."/>
            <person name="Rose D.J."/>
            <person name="Mayhew G.F."/>
            <person name="Evans P.S."/>
            <person name="Gregor J."/>
            <person name="Kirkpatrick H.A."/>
            <person name="Posfai G."/>
            <person name="Hackett J."/>
            <person name="Klink S."/>
            <person name="Boutin A."/>
            <person name="Shao Y."/>
            <person name="Miller L."/>
            <person name="Grotbeck E.J."/>
            <person name="Davis N.W."/>
            <person name="Lim A."/>
            <person name="Dimalanta E.T."/>
            <person name="Potamousis K."/>
            <person name="Apodaca J."/>
            <person name="Anantharaman T.S."/>
            <person name="Lin J."/>
            <person name="Yen G."/>
            <person name="Schwartz D.C."/>
            <person name="Welch R.A."/>
            <person name="Blattner F.R."/>
        </authorList>
    </citation>
    <scope>NUCLEOTIDE SEQUENCE [LARGE SCALE GENOMIC DNA]</scope>
    <source>
        <strain>O157:H7 / EDL933 / ATCC 700927 / EHEC</strain>
    </source>
</reference>
<reference key="2">
    <citation type="journal article" date="2001" name="DNA Res.">
        <title>Complete genome sequence of enterohemorrhagic Escherichia coli O157:H7 and genomic comparison with a laboratory strain K-12.</title>
        <authorList>
            <person name="Hayashi T."/>
            <person name="Makino K."/>
            <person name="Ohnishi M."/>
            <person name="Kurokawa K."/>
            <person name="Ishii K."/>
            <person name="Yokoyama K."/>
            <person name="Han C.-G."/>
            <person name="Ohtsubo E."/>
            <person name="Nakayama K."/>
            <person name="Murata T."/>
            <person name="Tanaka M."/>
            <person name="Tobe T."/>
            <person name="Iida T."/>
            <person name="Takami H."/>
            <person name="Honda T."/>
            <person name="Sasakawa C."/>
            <person name="Ogasawara N."/>
            <person name="Yasunaga T."/>
            <person name="Kuhara S."/>
            <person name="Shiba T."/>
            <person name="Hattori M."/>
            <person name="Shinagawa H."/>
        </authorList>
    </citation>
    <scope>NUCLEOTIDE SEQUENCE [LARGE SCALE GENOMIC DNA]</scope>
    <source>
        <strain>O157:H7 / Sakai / RIMD 0509952 / EHEC</strain>
    </source>
</reference>
<protein>
    <recommendedName>
        <fullName evidence="1">tRNA pseudouridine synthase A</fullName>
        <ecNumber evidence="1">5.4.99.12</ecNumber>
    </recommendedName>
    <alternativeName>
        <fullName evidence="1">tRNA pseudouridine(38-40) synthase</fullName>
    </alternativeName>
    <alternativeName>
        <fullName evidence="1">tRNA pseudouridylate synthase I</fullName>
    </alternativeName>
    <alternativeName>
        <fullName evidence="1">tRNA-uridine isomerase I</fullName>
    </alternativeName>
</protein>
<proteinExistence type="inferred from homology"/>
<comment type="function">
    <text evidence="1">Formation of pseudouridine at positions 38, 39 and 40 in the anticodon stem and loop of transfer RNAs.</text>
</comment>
<comment type="catalytic activity">
    <reaction evidence="1">
        <text>uridine(38/39/40) in tRNA = pseudouridine(38/39/40) in tRNA</text>
        <dbReference type="Rhea" id="RHEA:22376"/>
        <dbReference type="Rhea" id="RHEA-COMP:10085"/>
        <dbReference type="Rhea" id="RHEA-COMP:10087"/>
        <dbReference type="ChEBI" id="CHEBI:65314"/>
        <dbReference type="ChEBI" id="CHEBI:65315"/>
        <dbReference type="EC" id="5.4.99.12"/>
    </reaction>
</comment>
<comment type="subunit">
    <text evidence="1">Homodimer.</text>
</comment>
<comment type="similarity">
    <text evidence="1">Belongs to the tRNA pseudouridine synthase TruA family.</text>
</comment>
<dbReference type="EC" id="5.4.99.12" evidence="1"/>
<dbReference type="EMBL" id="AE005174">
    <property type="protein sequence ID" value="AAG57447.1"/>
    <property type="molecule type" value="Genomic_DNA"/>
</dbReference>
<dbReference type="EMBL" id="BA000007">
    <property type="protein sequence ID" value="BAB36625.1"/>
    <property type="molecule type" value="Genomic_DNA"/>
</dbReference>
<dbReference type="PIR" id="B91029">
    <property type="entry name" value="B91029"/>
</dbReference>
<dbReference type="PIR" id="C85873">
    <property type="entry name" value="C85873"/>
</dbReference>
<dbReference type="RefSeq" id="NP_311229.1">
    <property type="nucleotide sequence ID" value="NC_002695.1"/>
</dbReference>
<dbReference type="RefSeq" id="WP_001283590.1">
    <property type="nucleotide sequence ID" value="NZ_VOAI01000001.1"/>
</dbReference>
<dbReference type="SMR" id="P65845"/>
<dbReference type="STRING" id="155864.Z3580"/>
<dbReference type="GeneID" id="75172446"/>
<dbReference type="GeneID" id="912282"/>
<dbReference type="KEGG" id="ece:Z3580"/>
<dbReference type="KEGG" id="ecs:ECs_3202"/>
<dbReference type="PATRIC" id="fig|386585.9.peg.3342"/>
<dbReference type="eggNOG" id="COG0101">
    <property type="taxonomic scope" value="Bacteria"/>
</dbReference>
<dbReference type="HOGENOM" id="CLU_014673_0_2_6"/>
<dbReference type="OMA" id="ADAFCHN"/>
<dbReference type="Proteomes" id="UP000000558">
    <property type="component" value="Chromosome"/>
</dbReference>
<dbReference type="Proteomes" id="UP000002519">
    <property type="component" value="Chromosome"/>
</dbReference>
<dbReference type="GO" id="GO:0003723">
    <property type="term" value="F:RNA binding"/>
    <property type="evidence" value="ECO:0007669"/>
    <property type="project" value="InterPro"/>
</dbReference>
<dbReference type="GO" id="GO:0160147">
    <property type="term" value="F:tRNA pseudouridine(38-40) synthase activity"/>
    <property type="evidence" value="ECO:0007669"/>
    <property type="project" value="UniProtKB-EC"/>
</dbReference>
<dbReference type="GO" id="GO:0031119">
    <property type="term" value="P:tRNA pseudouridine synthesis"/>
    <property type="evidence" value="ECO:0007669"/>
    <property type="project" value="UniProtKB-UniRule"/>
</dbReference>
<dbReference type="CDD" id="cd02570">
    <property type="entry name" value="PseudoU_synth_EcTruA"/>
    <property type="match status" value="1"/>
</dbReference>
<dbReference type="FunFam" id="3.30.70.580:FF:000001">
    <property type="entry name" value="tRNA pseudouridine synthase A"/>
    <property type="match status" value="1"/>
</dbReference>
<dbReference type="FunFam" id="3.30.70.660:FF:000001">
    <property type="entry name" value="tRNA pseudouridine synthase A"/>
    <property type="match status" value="1"/>
</dbReference>
<dbReference type="Gene3D" id="3.30.70.660">
    <property type="entry name" value="Pseudouridine synthase I, catalytic domain, C-terminal subdomain"/>
    <property type="match status" value="1"/>
</dbReference>
<dbReference type="Gene3D" id="3.30.70.580">
    <property type="entry name" value="Pseudouridine synthase I, catalytic domain, N-terminal subdomain"/>
    <property type="match status" value="1"/>
</dbReference>
<dbReference type="HAMAP" id="MF_00171">
    <property type="entry name" value="TruA"/>
    <property type="match status" value="1"/>
</dbReference>
<dbReference type="InterPro" id="IPR020103">
    <property type="entry name" value="PsdUridine_synth_cat_dom_sf"/>
</dbReference>
<dbReference type="InterPro" id="IPR001406">
    <property type="entry name" value="PsdUridine_synth_TruA"/>
</dbReference>
<dbReference type="InterPro" id="IPR020097">
    <property type="entry name" value="PsdUridine_synth_TruA_a/b_dom"/>
</dbReference>
<dbReference type="InterPro" id="IPR020095">
    <property type="entry name" value="PsdUridine_synth_TruA_C"/>
</dbReference>
<dbReference type="InterPro" id="IPR020094">
    <property type="entry name" value="TruA/RsuA/RluB/E/F_N"/>
</dbReference>
<dbReference type="NCBIfam" id="TIGR00071">
    <property type="entry name" value="hisT_truA"/>
    <property type="match status" value="1"/>
</dbReference>
<dbReference type="PANTHER" id="PTHR11142">
    <property type="entry name" value="PSEUDOURIDYLATE SYNTHASE"/>
    <property type="match status" value="1"/>
</dbReference>
<dbReference type="PANTHER" id="PTHR11142:SF0">
    <property type="entry name" value="TRNA PSEUDOURIDINE SYNTHASE-LIKE 1"/>
    <property type="match status" value="1"/>
</dbReference>
<dbReference type="Pfam" id="PF01416">
    <property type="entry name" value="PseudoU_synth_1"/>
    <property type="match status" value="2"/>
</dbReference>
<dbReference type="PIRSF" id="PIRSF001430">
    <property type="entry name" value="tRNA_psdUrid_synth"/>
    <property type="match status" value="1"/>
</dbReference>
<dbReference type="SUPFAM" id="SSF55120">
    <property type="entry name" value="Pseudouridine synthase"/>
    <property type="match status" value="1"/>
</dbReference>
<keyword id="KW-0413">Isomerase</keyword>
<keyword id="KW-1185">Reference proteome</keyword>
<keyword id="KW-0819">tRNA processing</keyword>
<name>TRUA_ECO57</name>
<sequence length="270" mass="30385">MSDQQQPPVYKIALGIEYDGSKYYGWQRQNEVRSVQEKLEKALSQVANEPITVFCAGRTDAGVHGTGQVVHFETTAQRKDAAWTLGVNANLPGDIAVRWVKAVPDDFHARFSATARRYRYIIYNHRLRPAVLSKGVTHFYEPLDAERMHRAAQCLLGENDFTSFRAVQCQSRTPWRNVMHINVTRHGPYVVVDIKANAFVHHMVRNIVGSLMEVGAHNQPESWIAELLAAKDRTLAAATAKAEGLYLVAVDYPDRYDLPKPPMGPLFLAD</sequence>
<feature type="chain" id="PRO_0000057377" description="tRNA pseudouridine synthase A">
    <location>
        <begin position="1"/>
        <end position="270"/>
    </location>
</feature>
<feature type="region of interest" description="RNA binding" evidence="1">
    <location>
        <begin position="107"/>
        <end position="111"/>
    </location>
</feature>
<feature type="region of interest" description="Interaction with tRNA" evidence="1">
    <location>
        <begin position="168"/>
        <end position="172"/>
    </location>
</feature>
<feature type="active site" description="Nucleophile" evidence="1">
    <location>
        <position position="60"/>
    </location>
</feature>
<feature type="binding site" evidence="1">
    <location>
        <position position="118"/>
    </location>
    <ligand>
        <name>substrate</name>
    </ligand>
</feature>
<feature type="site" description="Interaction with tRNA; Important for base-flipping" evidence="1">
    <location>
        <position position="58"/>
    </location>
</feature>
<feature type="site" description="Interaction with tRNA" evidence="1">
    <location>
        <position position="78"/>
    </location>
</feature>
<feature type="site" description="Interaction with tRNA" evidence="1">
    <location>
        <position position="110"/>
    </location>
</feature>
<feature type="site" description="Interaction with tRNA" evidence="1">
    <location>
        <position position="126"/>
    </location>
</feature>
<feature type="site" description="Interaction with tRNA" evidence="1">
    <location>
        <position position="139"/>
    </location>
</feature>
<accession>P65845</accession>
<accession>Q8XCR2</accession>
<organism>
    <name type="scientific">Escherichia coli O157:H7</name>
    <dbReference type="NCBI Taxonomy" id="83334"/>
    <lineage>
        <taxon>Bacteria</taxon>
        <taxon>Pseudomonadati</taxon>
        <taxon>Pseudomonadota</taxon>
        <taxon>Gammaproteobacteria</taxon>
        <taxon>Enterobacterales</taxon>
        <taxon>Enterobacteriaceae</taxon>
        <taxon>Escherichia</taxon>
    </lineage>
</organism>
<gene>
    <name evidence="1" type="primary">truA</name>
    <name type="ordered locus">Z3580</name>
    <name type="ordered locus">ECs3202</name>
</gene>
<evidence type="ECO:0000255" key="1">
    <source>
        <dbReference type="HAMAP-Rule" id="MF_00171"/>
    </source>
</evidence>